<evidence type="ECO:0000269" key="1">
    <source>
    </source>
</evidence>
<evidence type="ECO:0000303" key="2">
    <source>
    </source>
</evidence>
<evidence type="ECO:0000305" key="3"/>
<evidence type="ECO:0000305" key="4">
    <source>
    </source>
</evidence>
<evidence type="ECO:0007744" key="5">
    <source>
        <dbReference type="PDB" id="7PZY"/>
    </source>
</evidence>
<evidence type="ECO:0007744" key="6">
    <source>
        <dbReference type="PDB" id="7Q0F"/>
    </source>
</evidence>
<evidence type="ECO:0007744" key="7">
    <source>
        <dbReference type="PDB" id="7Q0P"/>
    </source>
</evidence>
<accession>Q5AGZ7</accession>
<accession>Q3MPG3</accession>
<feature type="chain" id="PRO_0000456518" description="Large ribosomal subunit protein uL18">
    <location>
        <begin position="1"/>
        <end position="298"/>
    </location>
</feature>
<comment type="function">
    <text evidence="4">Component of the ribosome, a large ribonucleoprotein complex responsible for the synthesis of proteins in the cell. The small ribosomal subunit (SSU) binds messenger RNAs (mRNAs) and translates the encoded message by selecting cognate aminoacyl-transfer RNA (tRNA) molecules. The large subunit (LSU) contains the ribosomal catalytic site termed the peptidyl transferase center (PTC), which catalyzes the formation of peptide bonds, thereby polymerizing the amino acids delivered by tRNAs into a polypeptide chain. The nascent polypeptides leave the ribosome through a tunnel in the LSU and interact with protein factors that function in enzymatic processing, targeting, and the membrane insertion of nascent chains at the exit of the ribosomal tunnel.</text>
</comment>
<comment type="subunit">
    <text evidence="1">Component of the large ribosomal subunit (PubMed:35613268). Mature ribosomes consist of a small (40S) and a large (60S) subunit (PubMed:35613268). The 40S subunit contains about 32 different proteins and 1 molecule of RNA (18S) (PubMed:35613268). The 60S subunit contains 45 different proteins and 3 molecules of RNA (25S, 5.8S and 5S) (PubMed:35613268).</text>
</comment>
<comment type="subcellular location">
    <subcellularLocation>
        <location evidence="4">Cytoplasm</location>
    </subcellularLocation>
</comment>
<comment type="similarity">
    <text evidence="3">Belongs to the universal ribosomal protein uL18 family.</text>
</comment>
<proteinExistence type="evidence at protein level"/>
<name>RL5_CANAL</name>
<sequence>MPMQKEFRTSAYHSRFQTPFRRRQEGKTDYYQRKRLVTQHKAKYNSPKYRLVVRFTNKDIIAQIVSAHITGDVVFTAAYAHELPRYGIKYGLTNWSAAYAVGLLVARRALQKLGLDETYTGVEEVEGEFELTEAVEDGPRPFKVFLDIGLQRTTTGARVFGVLKGASDGGLYVPHSPNRFPGWDIEAEELDAELLRKYIFGGHVAEYMEELLDDDEEKYKSIFKNYIEEEIESEDVEEIYANAHEAIRADPSFKPTEKKFTKEQYKAESKKYRQQKLTRAERQAKVAKKIAEFKAQQE</sequence>
<gene>
    <name evidence="2" type="primary">RPL5</name>
    <name type="ordered locus">orf19.6541</name>
    <name type="ORF">CAALFM_C701790CA</name>
</gene>
<organism>
    <name type="scientific">Candida albicans (strain SC5314 / ATCC MYA-2876)</name>
    <name type="common">Yeast</name>
    <dbReference type="NCBI Taxonomy" id="237561"/>
    <lineage>
        <taxon>Eukaryota</taxon>
        <taxon>Fungi</taxon>
        <taxon>Dikarya</taxon>
        <taxon>Ascomycota</taxon>
        <taxon>Saccharomycotina</taxon>
        <taxon>Pichiomycetes</taxon>
        <taxon>Debaryomycetaceae</taxon>
        <taxon>Candida/Lodderomyces clade</taxon>
        <taxon>Candida</taxon>
    </lineage>
</organism>
<dbReference type="EMBL" id="CP017629">
    <property type="protein sequence ID" value="AOW30544.1"/>
    <property type="molecule type" value="Genomic_DNA"/>
</dbReference>
<dbReference type="RefSeq" id="XP_721379.1">
    <property type="nucleotide sequence ID" value="XM_716286.1"/>
</dbReference>
<dbReference type="PDB" id="7PZY">
    <property type="method" value="EM"/>
    <property type="resolution" value="2.32 A"/>
    <property type="chains" value="m=1-298"/>
</dbReference>
<dbReference type="PDB" id="7Q08">
    <property type="method" value="EM"/>
    <property type="resolution" value="2.56 A"/>
    <property type="chains" value="m=1-298"/>
</dbReference>
<dbReference type="PDB" id="7Q0F">
    <property type="method" value="EM"/>
    <property type="resolution" value="2.64 A"/>
    <property type="chains" value="m=1-298"/>
</dbReference>
<dbReference type="PDB" id="7Q0P">
    <property type="method" value="EM"/>
    <property type="resolution" value="2.77 A"/>
    <property type="chains" value="m=1-298"/>
</dbReference>
<dbReference type="PDB" id="7Q0R">
    <property type="method" value="EM"/>
    <property type="resolution" value="2.67 A"/>
    <property type="chains" value="m=1-298"/>
</dbReference>
<dbReference type="PDB" id="8C3A">
    <property type="method" value="X-ray"/>
    <property type="resolution" value="3.00 A"/>
    <property type="chains" value="AZ/m=1-298"/>
</dbReference>
<dbReference type="PDB" id="8OGJ">
    <property type="method" value="EM"/>
    <property type="resolution" value="3.10 A"/>
    <property type="chains" value="m=1-298"/>
</dbReference>
<dbReference type="PDB" id="8OH6">
    <property type="method" value="X-ray"/>
    <property type="resolution" value="3.35 A"/>
    <property type="chains" value="AZ/m=1-298"/>
</dbReference>
<dbReference type="PDB" id="8OI5">
    <property type="method" value="X-ray"/>
    <property type="resolution" value="2.90 A"/>
    <property type="chains" value="AZ/m=1-298"/>
</dbReference>
<dbReference type="PDB" id="8OJ3">
    <property type="method" value="X-ray"/>
    <property type="resolution" value="3.50 A"/>
    <property type="chains" value="AZ/m=1-298"/>
</dbReference>
<dbReference type="PDB" id="8Q5I">
    <property type="method" value="EM"/>
    <property type="resolution" value="2.45 A"/>
    <property type="chains" value="m=1-298"/>
</dbReference>
<dbReference type="PDBsum" id="7PZY"/>
<dbReference type="PDBsum" id="7Q08"/>
<dbReference type="PDBsum" id="7Q0F"/>
<dbReference type="PDBsum" id="7Q0P"/>
<dbReference type="PDBsum" id="7Q0R"/>
<dbReference type="PDBsum" id="8C3A"/>
<dbReference type="PDBsum" id="8OGJ"/>
<dbReference type="PDBsum" id="8OH6"/>
<dbReference type="PDBsum" id="8OI5"/>
<dbReference type="PDBsum" id="8OJ3"/>
<dbReference type="PDBsum" id="8Q5I"/>
<dbReference type="EMDB" id="EMD-13737"/>
<dbReference type="EMDB" id="EMD-13741"/>
<dbReference type="EMDB" id="EMD-13744"/>
<dbReference type="EMDB" id="EMD-13749"/>
<dbReference type="EMDB" id="EMD-13750"/>
<dbReference type="EMDB" id="EMD-16874"/>
<dbReference type="SMR" id="Q5AGZ7"/>
<dbReference type="FunCoup" id="Q5AGZ7">
    <property type="interactions" value="1344"/>
</dbReference>
<dbReference type="STRING" id="237561.Q5AGZ7"/>
<dbReference type="EnsemblFungi" id="C7_01790C_A-T">
    <property type="protein sequence ID" value="C7_01790C_A-T-p1"/>
    <property type="gene ID" value="C7_01790C_A"/>
</dbReference>
<dbReference type="GeneID" id="3637057"/>
<dbReference type="KEGG" id="cal:CAALFM_C701790CA"/>
<dbReference type="CGD" id="CAL0000178607">
    <property type="gene designation" value="RPL5"/>
</dbReference>
<dbReference type="VEuPathDB" id="FungiDB:C7_01790C_A"/>
<dbReference type="eggNOG" id="KOG0875">
    <property type="taxonomic scope" value="Eukaryota"/>
</dbReference>
<dbReference type="HOGENOM" id="CLU_056222_1_0_1"/>
<dbReference type="InParanoid" id="Q5AGZ7"/>
<dbReference type="OMA" id="IYEAQVE"/>
<dbReference type="OrthoDB" id="1618453at2759"/>
<dbReference type="Proteomes" id="UP000000559">
    <property type="component" value="Chromosome 7"/>
</dbReference>
<dbReference type="GO" id="GO:0022625">
    <property type="term" value="C:cytosolic large ribosomal subunit"/>
    <property type="evidence" value="ECO:0000318"/>
    <property type="project" value="GO_Central"/>
</dbReference>
<dbReference type="GO" id="GO:0008097">
    <property type="term" value="F:5S rRNA binding"/>
    <property type="evidence" value="ECO:0000318"/>
    <property type="project" value="GO_Central"/>
</dbReference>
<dbReference type="GO" id="GO:0003735">
    <property type="term" value="F:structural constituent of ribosome"/>
    <property type="evidence" value="ECO:0000318"/>
    <property type="project" value="GO_Central"/>
</dbReference>
<dbReference type="GO" id="GO:0000027">
    <property type="term" value="P:ribosomal large subunit assembly"/>
    <property type="evidence" value="ECO:0000318"/>
    <property type="project" value="GO_Central"/>
</dbReference>
<dbReference type="GO" id="GO:0006412">
    <property type="term" value="P:translation"/>
    <property type="evidence" value="ECO:0007669"/>
    <property type="project" value="InterPro"/>
</dbReference>
<dbReference type="CDD" id="cd00432">
    <property type="entry name" value="Ribosomal_L18_L5e"/>
    <property type="match status" value="1"/>
</dbReference>
<dbReference type="FunFam" id="3.30.420.100:FF:000002">
    <property type="entry name" value="60S ribosomal protein L5"/>
    <property type="match status" value="1"/>
</dbReference>
<dbReference type="Gene3D" id="3.30.420.100">
    <property type="match status" value="1"/>
</dbReference>
<dbReference type="HAMAP" id="MF_01337_A">
    <property type="entry name" value="Ribosomal_uL18_A"/>
    <property type="match status" value="1"/>
</dbReference>
<dbReference type="InterPro" id="IPR005485">
    <property type="entry name" value="Rbsml_uL18_euk"/>
</dbReference>
<dbReference type="InterPro" id="IPR025607">
    <property type="entry name" value="Ribosomal_uL18_C_euk"/>
</dbReference>
<dbReference type="PANTHER" id="PTHR23410:SF12">
    <property type="entry name" value="LARGE RIBOSOMAL SUBUNIT PROTEIN UL18"/>
    <property type="match status" value="1"/>
</dbReference>
<dbReference type="PANTHER" id="PTHR23410">
    <property type="entry name" value="RIBOSOMAL PROTEIN L5-RELATED"/>
    <property type="match status" value="1"/>
</dbReference>
<dbReference type="Pfam" id="PF14204">
    <property type="entry name" value="Ribosomal_L18_c"/>
    <property type="match status" value="1"/>
</dbReference>
<dbReference type="Pfam" id="PF17144">
    <property type="entry name" value="Ribosomal_L5e"/>
    <property type="match status" value="1"/>
</dbReference>
<dbReference type="PRINTS" id="PR00058">
    <property type="entry name" value="RIBOSOMALL5"/>
</dbReference>
<dbReference type="SUPFAM" id="SSF53137">
    <property type="entry name" value="Translational machinery components"/>
    <property type="match status" value="1"/>
</dbReference>
<reference key="1">
    <citation type="journal article" date="2004" name="Proc. Natl. Acad. Sci. U.S.A.">
        <title>The diploid genome sequence of Candida albicans.</title>
        <authorList>
            <person name="Jones T."/>
            <person name="Federspiel N.A."/>
            <person name="Chibana H."/>
            <person name="Dungan J."/>
            <person name="Kalman S."/>
            <person name="Magee B.B."/>
            <person name="Newport G."/>
            <person name="Thorstenson Y.R."/>
            <person name="Agabian N."/>
            <person name="Magee P.T."/>
            <person name="Davis R.W."/>
            <person name="Scherer S."/>
        </authorList>
    </citation>
    <scope>NUCLEOTIDE SEQUENCE [LARGE SCALE GENOMIC DNA]</scope>
    <source>
        <strain>SC5314 / ATCC MYA-2876</strain>
    </source>
</reference>
<reference key="2">
    <citation type="journal article" date="2007" name="Genome Biol.">
        <title>Assembly of the Candida albicans genome into sixteen supercontigs aligned on the eight chromosomes.</title>
        <authorList>
            <person name="van het Hoog M."/>
            <person name="Rast T.J."/>
            <person name="Martchenko M."/>
            <person name="Grindle S."/>
            <person name="Dignard D."/>
            <person name="Hogues H."/>
            <person name="Cuomo C."/>
            <person name="Berriman M."/>
            <person name="Scherer S."/>
            <person name="Magee B.B."/>
            <person name="Whiteway M."/>
            <person name="Chibana H."/>
            <person name="Nantel A."/>
            <person name="Magee P.T."/>
        </authorList>
    </citation>
    <scope>GENOME REANNOTATION</scope>
    <source>
        <strain>SC5314 / ATCC MYA-2876</strain>
    </source>
</reference>
<reference key="3">
    <citation type="journal article" date="2013" name="Genome Biol.">
        <title>Assembly of a phased diploid Candida albicans genome facilitates allele-specific measurements and provides a simple model for repeat and indel structure.</title>
        <authorList>
            <person name="Muzzey D."/>
            <person name="Schwartz K."/>
            <person name="Weissman J.S."/>
            <person name="Sherlock G."/>
        </authorList>
    </citation>
    <scope>NUCLEOTIDE SEQUENCE [LARGE SCALE GENOMIC DNA]</scope>
    <scope>GENOME REANNOTATION</scope>
    <source>
        <strain>SC5314 / ATCC MYA-2876</strain>
    </source>
</reference>
<reference evidence="5 6 7" key="4">
    <citation type="journal article" date="2022" name="Sci. Adv.">
        <title>E-site drug specificity of the human pathogen Candida albicans ribosome.</title>
        <authorList>
            <person name="Zgadzay Y."/>
            <person name="Kolosova O."/>
            <person name="Stetsenko A."/>
            <person name="Wu C."/>
            <person name="Bruchlen D."/>
            <person name="Usachev K."/>
            <person name="Validov S."/>
            <person name="Jenner L."/>
            <person name="Rogachev A."/>
            <person name="Yusupova G."/>
            <person name="Sachs M.S."/>
            <person name="Guskov A."/>
            <person name="Yusupov M."/>
        </authorList>
    </citation>
    <scope>STRUCTURE BY ELECTRON MICROSCOPY (2.32 ANGSTROMS) OF THE 80S RIBOSOME</scope>
    <scope>SUBUNIT</scope>
</reference>
<keyword id="KW-0002">3D-structure</keyword>
<keyword id="KW-0963">Cytoplasm</keyword>
<keyword id="KW-1185">Reference proteome</keyword>
<keyword id="KW-0687">Ribonucleoprotein</keyword>
<keyword id="KW-0689">Ribosomal protein</keyword>
<protein>
    <recommendedName>
        <fullName evidence="2">Large ribosomal subunit protein uL18</fullName>
    </recommendedName>
    <alternativeName>
        <fullName>60S ribosomal protein L5</fullName>
    </alternativeName>
</protein>